<comment type="function">
    <text evidence="1">Component of LSm protein complexes, which are involved in RNA processing and may function in a chaperone-like manner, facilitating the efficient association of RNA processing factors with their substrates. Component of the cytoplasmic LSM1-LSM7 complex, which is thought to be involved in mRNA degradation by activating the decapping step in the 5'-to-3' mRNA decay pathway. Component of the nuclear LSM2-LSM8 complex, which is involved in splicing of nuclear mRNAs. LSM2-LSM8 associates with multiple snRNP complexes containing the U6 snRNA (U4/U6 di-snRNP, spliceosomal U4/U6.U5 tri-snRNP, and free U6 snRNP). It binds directly to the 3'-terminal U-tract of U6 snRNA and plays a role in the biogenesis and stability of the U6 snRNP and U4/U6 snRNP complexes. LSM2-LSM8 probably also is involved degradation of nuclear pre-mRNA by targeting them for decapping, and in processing of pre-tRNAs, pre-rRNAs and U3 snoRNA (By similarity).</text>
</comment>
<comment type="subunit">
    <text evidence="1">Component of the heptameric LSM1-LSM7 complex, which consists of LSM1, LSM2, LSM3, LSM4, LSM5, LSM6 and LSM7. Component of the heptameric LSM2-LSM8 complex, which consists of LSM2, LSM3, LSM4, LSM5, LSM6, LSM7 and LSM8. The LSm subunits form a seven-membered ring structure with a doughnut shape (By similarity).</text>
</comment>
<comment type="subcellular location">
    <subcellularLocation>
        <location evidence="1">Cytoplasm</location>
    </subcellularLocation>
    <subcellularLocation>
        <location evidence="1">Nucleus</location>
    </subcellularLocation>
</comment>
<comment type="similarity">
    <text evidence="3">Belongs to the snRNP Sm proteins family. SmF/LSm6 subfamily.</text>
</comment>
<comment type="sequence caution" evidence="3">
    <conflict type="erroneous gene model prediction">
        <sequence resource="EMBL-CDS" id="CAG87454"/>
    </conflict>
</comment>
<proteinExistence type="inferred from homology"/>
<reference key="1">
    <citation type="journal article" date="2004" name="Nature">
        <title>Genome evolution in yeasts.</title>
        <authorList>
            <person name="Dujon B."/>
            <person name="Sherman D."/>
            <person name="Fischer G."/>
            <person name="Durrens P."/>
            <person name="Casaregola S."/>
            <person name="Lafontaine I."/>
            <person name="de Montigny J."/>
            <person name="Marck C."/>
            <person name="Neuveglise C."/>
            <person name="Talla E."/>
            <person name="Goffard N."/>
            <person name="Frangeul L."/>
            <person name="Aigle M."/>
            <person name="Anthouard V."/>
            <person name="Babour A."/>
            <person name="Barbe V."/>
            <person name="Barnay S."/>
            <person name="Blanchin S."/>
            <person name="Beckerich J.-M."/>
            <person name="Beyne E."/>
            <person name="Bleykasten C."/>
            <person name="Boisrame A."/>
            <person name="Boyer J."/>
            <person name="Cattolico L."/>
            <person name="Confanioleri F."/>
            <person name="de Daruvar A."/>
            <person name="Despons L."/>
            <person name="Fabre E."/>
            <person name="Fairhead C."/>
            <person name="Ferry-Dumazet H."/>
            <person name="Groppi A."/>
            <person name="Hantraye F."/>
            <person name="Hennequin C."/>
            <person name="Jauniaux N."/>
            <person name="Joyet P."/>
            <person name="Kachouri R."/>
            <person name="Kerrest A."/>
            <person name="Koszul R."/>
            <person name="Lemaire M."/>
            <person name="Lesur I."/>
            <person name="Ma L."/>
            <person name="Muller H."/>
            <person name="Nicaud J.-M."/>
            <person name="Nikolski M."/>
            <person name="Oztas S."/>
            <person name="Ozier-Kalogeropoulos O."/>
            <person name="Pellenz S."/>
            <person name="Potier S."/>
            <person name="Richard G.-F."/>
            <person name="Straub M.-L."/>
            <person name="Suleau A."/>
            <person name="Swennen D."/>
            <person name="Tekaia F."/>
            <person name="Wesolowski-Louvel M."/>
            <person name="Westhof E."/>
            <person name="Wirth B."/>
            <person name="Zeniou-Meyer M."/>
            <person name="Zivanovic Y."/>
            <person name="Bolotin-Fukuhara M."/>
            <person name="Thierry A."/>
            <person name="Bouchier C."/>
            <person name="Caudron B."/>
            <person name="Scarpelli C."/>
            <person name="Gaillardin C."/>
            <person name="Weissenbach J."/>
            <person name="Wincker P."/>
            <person name="Souciet J.-L."/>
        </authorList>
    </citation>
    <scope>NUCLEOTIDE SEQUENCE [LARGE SCALE GENOMIC DNA]</scope>
    <source>
        <strain>ATCC 36239 / CBS 767 / BCRC 21394 / JCM 1990 / NBRC 0083 / IGC 2968</strain>
    </source>
</reference>
<name>LSM6_DEBHA</name>
<feature type="chain" id="PRO_0000333596" description="U6 snRNA-associated Sm-like protein LSm6">
    <location>
        <begin position="1"/>
        <end position="85"/>
    </location>
</feature>
<feature type="domain" description="Sm" evidence="2">
    <location>
        <begin position="16"/>
        <end position="85"/>
    </location>
</feature>
<evidence type="ECO:0000250" key="1"/>
<evidence type="ECO:0000255" key="2">
    <source>
        <dbReference type="PROSITE-ProRule" id="PRU01346"/>
    </source>
</evidence>
<evidence type="ECO:0000305" key="3"/>
<dbReference type="EMBL" id="CR382136">
    <property type="protein sequence ID" value="CAG87454.1"/>
    <property type="status" value="ALT_SEQ"/>
    <property type="molecule type" value="Genomic_DNA"/>
</dbReference>
<dbReference type="RefSeq" id="XP_459280.1">
    <property type="nucleotide sequence ID" value="XM_459280.1"/>
</dbReference>
<dbReference type="SMR" id="Q6BR90"/>
<dbReference type="FunCoup" id="Q6BR90">
    <property type="interactions" value="874"/>
</dbReference>
<dbReference type="STRING" id="284592.Q6BR90"/>
<dbReference type="GeneID" id="2901828"/>
<dbReference type="KEGG" id="dha:DEHA2D18282g"/>
<dbReference type="eggNOG" id="KOG1783">
    <property type="taxonomic scope" value="Eukaryota"/>
</dbReference>
<dbReference type="HOGENOM" id="CLU_076902_7_5_1"/>
<dbReference type="InParanoid" id="Q6BR90"/>
<dbReference type="OrthoDB" id="268799at2759"/>
<dbReference type="Proteomes" id="UP000000599">
    <property type="component" value="Chromosome D"/>
</dbReference>
<dbReference type="GO" id="GO:0005730">
    <property type="term" value="C:nucleolus"/>
    <property type="evidence" value="ECO:0007669"/>
    <property type="project" value="TreeGrafter"/>
</dbReference>
<dbReference type="GO" id="GO:0000932">
    <property type="term" value="C:P-body"/>
    <property type="evidence" value="ECO:0007669"/>
    <property type="project" value="TreeGrafter"/>
</dbReference>
<dbReference type="GO" id="GO:0005732">
    <property type="term" value="C:sno(s)RNA-containing ribonucleoprotein complex"/>
    <property type="evidence" value="ECO:0007669"/>
    <property type="project" value="TreeGrafter"/>
</dbReference>
<dbReference type="GO" id="GO:0005681">
    <property type="term" value="C:spliceosomal complex"/>
    <property type="evidence" value="ECO:0007669"/>
    <property type="project" value="UniProtKB-KW"/>
</dbReference>
<dbReference type="GO" id="GO:0046540">
    <property type="term" value="C:U4/U6 x U5 tri-snRNP complex"/>
    <property type="evidence" value="ECO:0007669"/>
    <property type="project" value="TreeGrafter"/>
</dbReference>
<dbReference type="GO" id="GO:0005688">
    <property type="term" value="C:U6 snRNP"/>
    <property type="evidence" value="ECO:0007669"/>
    <property type="project" value="TreeGrafter"/>
</dbReference>
<dbReference type="GO" id="GO:0003723">
    <property type="term" value="F:RNA binding"/>
    <property type="evidence" value="ECO:0007669"/>
    <property type="project" value="UniProtKB-KW"/>
</dbReference>
<dbReference type="GO" id="GO:0030490">
    <property type="term" value="P:maturation of SSU-rRNA"/>
    <property type="evidence" value="ECO:0007669"/>
    <property type="project" value="TreeGrafter"/>
</dbReference>
<dbReference type="GO" id="GO:0000398">
    <property type="term" value="P:mRNA splicing, via spliceosome"/>
    <property type="evidence" value="ECO:0007669"/>
    <property type="project" value="InterPro"/>
</dbReference>
<dbReference type="GO" id="GO:0008033">
    <property type="term" value="P:tRNA processing"/>
    <property type="evidence" value="ECO:0007669"/>
    <property type="project" value="UniProtKB-KW"/>
</dbReference>
<dbReference type="CDD" id="cd01726">
    <property type="entry name" value="LSm6"/>
    <property type="match status" value="1"/>
</dbReference>
<dbReference type="FunFam" id="2.30.30.100:FF:000037">
    <property type="entry name" value="U6 snRNA-associated Sm-like protein LSm6"/>
    <property type="match status" value="1"/>
</dbReference>
<dbReference type="Gene3D" id="2.30.30.100">
    <property type="match status" value="1"/>
</dbReference>
<dbReference type="InterPro" id="IPR016487">
    <property type="entry name" value="Lsm6/sSmF"/>
</dbReference>
<dbReference type="InterPro" id="IPR010920">
    <property type="entry name" value="LSM_dom_sf"/>
</dbReference>
<dbReference type="InterPro" id="IPR047575">
    <property type="entry name" value="Sm"/>
</dbReference>
<dbReference type="InterPro" id="IPR001163">
    <property type="entry name" value="Sm_dom_euk/arc"/>
</dbReference>
<dbReference type="PANTHER" id="PTHR11021">
    <property type="entry name" value="SMALL NUCLEAR RIBONUCLEOPROTEIN F SNRNP-F"/>
    <property type="match status" value="1"/>
</dbReference>
<dbReference type="PANTHER" id="PTHR11021:SF1">
    <property type="entry name" value="U6 SNRNA-ASSOCIATED SM-LIKE PROTEIN LSM6"/>
    <property type="match status" value="1"/>
</dbReference>
<dbReference type="Pfam" id="PF01423">
    <property type="entry name" value="LSM"/>
    <property type="match status" value="1"/>
</dbReference>
<dbReference type="PIRSF" id="PIRSF006609">
    <property type="entry name" value="snRNP_SmF"/>
    <property type="match status" value="1"/>
</dbReference>
<dbReference type="SMART" id="SM00651">
    <property type="entry name" value="Sm"/>
    <property type="match status" value="1"/>
</dbReference>
<dbReference type="SUPFAM" id="SSF50182">
    <property type="entry name" value="Sm-like ribonucleoproteins"/>
    <property type="match status" value="1"/>
</dbReference>
<dbReference type="PROSITE" id="PS52002">
    <property type="entry name" value="SM"/>
    <property type="match status" value="1"/>
</dbReference>
<organism>
    <name type="scientific">Debaryomyces hansenii (strain ATCC 36239 / CBS 767 / BCRC 21394 / JCM 1990 / NBRC 0083 / IGC 2968)</name>
    <name type="common">Yeast</name>
    <name type="synonym">Torulaspora hansenii</name>
    <dbReference type="NCBI Taxonomy" id="284592"/>
    <lineage>
        <taxon>Eukaryota</taxon>
        <taxon>Fungi</taxon>
        <taxon>Dikarya</taxon>
        <taxon>Ascomycota</taxon>
        <taxon>Saccharomycotina</taxon>
        <taxon>Pichiomycetes</taxon>
        <taxon>Debaryomycetaceae</taxon>
        <taxon>Debaryomyces</taxon>
    </lineage>
</organism>
<accession>Q6BR90</accession>
<protein>
    <recommendedName>
        <fullName>U6 snRNA-associated Sm-like protein LSm6</fullName>
    </recommendedName>
</protein>
<gene>
    <name type="primary">LSM6</name>
    <name type="ordered locus">DEHA2D18282g</name>
</gene>
<keyword id="KW-0963">Cytoplasm</keyword>
<keyword id="KW-0507">mRNA processing</keyword>
<keyword id="KW-0508">mRNA splicing</keyword>
<keyword id="KW-0539">Nucleus</keyword>
<keyword id="KW-1185">Reference proteome</keyword>
<keyword id="KW-0687">Ribonucleoprotein</keyword>
<keyword id="KW-0694">RNA-binding</keyword>
<keyword id="KW-0698">rRNA processing</keyword>
<keyword id="KW-0747">Spliceosome</keyword>
<keyword id="KW-0819">tRNA processing</keyword>
<sequence>MSSIKKESSSGSENTGPSVFLSEIIGSSVTVRLHNGVEYLGNLQSIDGYMNIVLDETKEFVGGDQARNYGDVFIRGNNVLYISEA</sequence>